<name>F168B_XENLA</name>
<dbReference type="EMBL" id="BC123215">
    <property type="protein sequence ID" value="AAI23216.1"/>
    <property type="molecule type" value="mRNA"/>
</dbReference>
<dbReference type="RefSeq" id="NP_001090488.1">
    <property type="nucleotide sequence ID" value="NM_001097019.1"/>
</dbReference>
<dbReference type="DNASU" id="779401"/>
<dbReference type="GeneID" id="779401"/>
<dbReference type="KEGG" id="xla:779401"/>
<dbReference type="AGR" id="Xenbase:XB-GENE-5865215"/>
<dbReference type="CTD" id="779401"/>
<dbReference type="Xenbase" id="XB-GENE-5865215">
    <property type="gene designation" value="fam168b.S"/>
</dbReference>
<dbReference type="OrthoDB" id="9893817at2759"/>
<dbReference type="Proteomes" id="UP000186698">
    <property type="component" value="Chromosome 5S"/>
</dbReference>
<dbReference type="Bgee" id="779401">
    <property type="expression patterns" value="Expressed in egg cell and 19 other cell types or tissues"/>
</dbReference>
<dbReference type="GO" id="GO:0030424">
    <property type="term" value="C:axon"/>
    <property type="evidence" value="ECO:0007669"/>
    <property type="project" value="UniProtKB-SubCell"/>
</dbReference>
<dbReference type="GO" id="GO:0048471">
    <property type="term" value="C:perinuclear region of cytoplasm"/>
    <property type="evidence" value="ECO:0007669"/>
    <property type="project" value="UniProtKB-SubCell"/>
</dbReference>
<dbReference type="GO" id="GO:0005886">
    <property type="term" value="C:plasma membrane"/>
    <property type="evidence" value="ECO:0007669"/>
    <property type="project" value="UniProtKB-SubCell"/>
</dbReference>
<dbReference type="InterPro" id="IPR029247">
    <property type="entry name" value="FAM168A/MANI"/>
</dbReference>
<dbReference type="PANTHER" id="PTHR31844">
    <property type="entry name" value="MYELIN-ASSOCIATED NEURITE-OUTGROWTH INHIBITOR-RELATED"/>
    <property type="match status" value="1"/>
</dbReference>
<dbReference type="Pfam" id="PF14944">
    <property type="entry name" value="TCRP1"/>
    <property type="match status" value="1"/>
</dbReference>
<accession>Q0IHC4</accession>
<keyword id="KW-1003">Cell membrane</keyword>
<keyword id="KW-0966">Cell projection</keyword>
<keyword id="KW-0963">Cytoplasm</keyword>
<keyword id="KW-0472">Membrane</keyword>
<keyword id="KW-1185">Reference proteome</keyword>
<keyword id="KW-0812">Transmembrane</keyword>
<keyword id="KW-1133">Transmembrane helix</keyword>
<proteinExistence type="evidence at transcript level"/>
<feature type="chain" id="PRO_0000325981" description="Myelin-associated neurite-outgrowth inhibitor">
    <location>
        <begin position="1"/>
        <end position="225"/>
    </location>
</feature>
<feature type="topological domain" description="Cytoplasmic" evidence="2">
    <location>
        <begin position="1"/>
        <end position="58"/>
    </location>
</feature>
<feature type="transmembrane region" description="Helical" evidence="2">
    <location>
        <begin position="59"/>
        <end position="75"/>
    </location>
</feature>
<feature type="topological domain" description="Extracellular" evidence="2">
    <location>
        <begin position="76"/>
        <end position="173"/>
    </location>
</feature>
<feature type="transmembrane region" description="Helical" evidence="2">
    <location>
        <begin position="174"/>
        <end position="193"/>
    </location>
</feature>
<feature type="topological domain" description="Cytoplasmic" evidence="2">
    <location>
        <begin position="194"/>
        <end position="225"/>
    </location>
</feature>
<organism>
    <name type="scientific">Xenopus laevis</name>
    <name type="common">African clawed frog</name>
    <dbReference type="NCBI Taxonomy" id="8355"/>
    <lineage>
        <taxon>Eukaryota</taxon>
        <taxon>Metazoa</taxon>
        <taxon>Chordata</taxon>
        <taxon>Craniata</taxon>
        <taxon>Vertebrata</taxon>
        <taxon>Euteleostomi</taxon>
        <taxon>Amphibia</taxon>
        <taxon>Batrachia</taxon>
        <taxon>Anura</taxon>
        <taxon>Pipoidea</taxon>
        <taxon>Pipidae</taxon>
        <taxon>Xenopodinae</taxon>
        <taxon>Xenopus</taxon>
        <taxon>Xenopus</taxon>
    </lineage>
</organism>
<sequence>MNPVYSPGSSGVPYANAKGIGYPAGFPMGYAAAAPAYSPNMYAGPNPAFQQELEHPAHVSSGVQMFMFGHAFSVARNGAIPSGYTPGTPYKVSCSPTSGTVPPYSSSPNPYQTAVYPVRSAYPQQNPYAQQGAYYTQPFYAAPPHVIHHTTVVQPNGMPATMYPAPIQSPRGNGVAMGMVAGTTMAMSAGTLLTSHYPSPVAPQVTMPTYRPPGTPTYSYVPPQW</sequence>
<gene>
    <name type="primary">fam168b</name>
</gene>
<reference key="1">
    <citation type="submission" date="2006-09" db="EMBL/GenBank/DDBJ databases">
        <authorList>
            <consortium name="NIH - Xenopus Gene Collection (XGC) project"/>
        </authorList>
    </citation>
    <scope>NUCLEOTIDE SEQUENCE [LARGE SCALE MRNA]</scope>
    <source>
        <tissue>Fat body</tissue>
    </source>
</reference>
<evidence type="ECO:0000250" key="1">
    <source>
        <dbReference type="UniProtKB" id="D4AEP3"/>
    </source>
</evidence>
<evidence type="ECO:0000255" key="2"/>
<evidence type="ECO:0000305" key="3"/>
<protein>
    <recommendedName>
        <fullName>Myelin-associated neurite-outgrowth inhibitor</fullName>
        <shortName>Mani</shortName>
    </recommendedName>
</protein>
<comment type="function">
    <text evidence="1">Inhibitor of neuronal axonal outgrowth.</text>
</comment>
<comment type="subcellular location">
    <subcellularLocation>
        <location evidence="1">Cytoplasm</location>
        <location evidence="1">Perinuclear region</location>
    </subcellularLocation>
    <subcellularLocation>
        <location evidence="1">Cell membrane</location>
        <topology evidence="1">Multi-pass membrane protein</topology>
    </subcellularLocation>
    <subcellularLocation>
        <location evidence="1">Cell projection</location>
        <location evidence="1">Axon</location>
    </subcellularLocation>
</comment>
<comment type="similarity">
    <text evidence="3">Belongs to the FAM168 family.</text>
</comment>